<gene>
    <name evidence="1" type="primary">idi</name>
    <name type="ordered locus">CE2207</name>
</gene>
<name>IDI_COREF</name>
<organism>
    <name type="scientific">Corynebacterium efficiens (strain DSM 44549 / YS-314 / AJ 12310 / JCM 11189 / NBRC 100395)</name>
    <dbReference type="NCBI Taxonomy" id="196164"/>
    <lineage>
        <taxon>Bacteria</taxon>
        <taxon>Bacillati</taxon>
        <taxon>Actinomycetota</taxon>
        <taxon>Actinomycetes</taxon>
        <taxon>Mycobacteriales</taxon>
        <taxon>Corynebacteriaceae</taxon>
        <taxon>Corynebacterium</taxon>
    </lineage>
</organism>
<protein>
    <recommendedName>
        <fullName evidence="1">Isopentenyl-diphosphate Delta-isomerase</fullName>
        <shortName evidence="1">IPP isomerase</shortName>
        <ecNumber evidence="1">5.3.3.2</ecNumber>
    </recommendedName>
    <alternativeName>
        <fullName evidence="1">IPP:DMAPP isomerase</fullName>
    </alternativeName>
    <alternativeName>
        <fullName evidence="1">Isopentenyl pyrophosphate isomerase</fullName>
    </alternativeName>
</protein>
<keyword id="KW-0963">Cytoplasm</keyword>
<keyword id="KW-0413">Isomerase</keyword>
<keyword id="KW-0414">Isoprene biosynthesis</keyword>
<keyword id="KW-0460">Magnesium</keyword>
<keyword id="KW-0464">Manganese</keyword>
<keyword id="KW-0479">Metal-binding</keyword>
<keyword id="KW-1185">Reference proteome</keyword>
<proteinExistence type="inferred from homology"/>
<reference key="1">
    <citation type="journal article" date="2003" name="Genome Res.">
        <title>Comparative complete genome sequence analysis of the amino acid replacements responsible for the thermostability of Corynebacterium efficiens.</title>
        <authorList>
            <person name="Nishio Y."/>
            <person name="Nakamura Y."/>
            <person name="Kawarabayasi Y."/>
            <person name="Usuda Y."/>
            <person name="Kimura E."/>
            <person name="Sugimoto S."/>
            <person name="Matsui K."/>
            <person name="Yamagishi A."/>
            <person name="Kikuchi H."/>
            <person name="Ikeo K."/>
            <person name="Gojobori T."/>
        </authorList>
    </citation>
    <scope>NUCLEOTIDE SEQUENCE [LARGE SCALE GENOMIC DNA]</scope>
    <source>
        <strain>DSM 44549 / YS-314 / AJ 12310 / JCM 11189 / NBRC 100395</strain>
    </source>
</reference>
<sequence>MTNEEELVVLADEEGNAIGTAPKATVHTTDTPLHFAFSSYILNPRGELLVTRRALSKKTWPGVWTNSMCGHPAPDETNADAIRRRGVSELGLDFGSFLDIQVVLDDYRYRAEDSSGIVEWEICPVHLVRLAVGEFVEPLPDEVEEFAWEEPQKVFDAVDATPFVFSPWMVDQLSHPELRQAILEAFDPEA</sequence>
<feature type="chain" id="PRO_0000205246" description="Isopentenyl-diphosphate Delta-isomerase">
    <location>
        <begin position="1"/>
        <end position="190"/>
    </location>
</feature>
<feature type="domain" description="Nudix hydrolase">
    <location>
        <begin position="32"/>
        <end position="171"/>
    </location>
</feature>
<feature type="active site" evidence="1">
    <location>
        <position position="69"/>
    </location>
</feature>
<feature type="active site" evidence="1">
    <location>
        <position position="121"/>
    </location>
</feature>
<feature type="binding site" evidence="1">
    <location>
        <position position="27"/>
    </location>
    <ligand>
        <name>Mn(2+)</name>
        <dbReference type="ChEBI" id="CHEBI:29035"/>
    </ligand>
</feature>
<feature type="binding site" evidence="1">
    <location>
        <position position="34"/>
    </location>
    <ligand>
        <name>Mn(2+)</name>
        <dbReference type="ChEBI" id="CHEBI:29035"/>
    </ligand>
</feature>
<feature type="binding site" evidence="1">
    <location>
        <position position="69"/>
    </location>
    <ligand>
        <name>Mg(2+)</name>
        <dbReference type="ChEBI" id="CHEBI:18420"/>
    </ligand>
</feature>
<feature type="binding site" evidence="1">
    <location>
        <position position="71"/>
    </location>
    <ligand>
        <name>Mn(2+)</name>
        <dbReference type="ChEBI" id="CHEBI:29035"/>
    </ligand>
</feature>
<feature type="binding site" evidence="1">
    <location>
        <position position="89"/>
    </location>
    <ligand>
        <name>Mg(2+)</name>
        <dbReference type="ChEBI" id="CHEBI:18420"/>
    </ligand>
</feature>
<feature type="binding site" evidence="1">
    <location>
        <position position="119"/>
    </location>
    <ligand>
        <name>Mn(2+)</name>
        <dbReference type="ChEBI" id="CHEBI:29035"/>
    </ligand>
</feature>
<feature type="binding site" evidence="1">
    <location>
        <position position="121"/>
    </location>
    <ligand>
        <name>Mn(2+)</name>
        <dbReference type="ChEBI" id="CHEBI:29035"/>
    </ligand>
</feature>
<dbReference type="EC" id="5.3.3.2" evidence="1"/>
<dbReference type="EMBL" id="BA000035">
    <property type="protein sequence ID" value="BAC19017.1"/>
    <property type="molecule type" value="Genomic_DNA"/>
</dbReference>
<dbReference type="RefSeq" id="WP_006768211.1">
    <property type="nucleotide sequence ID" value="NC_004369.1"/>
</dbReference>
<dbReference type="SMR" id="Q8FND7"/>
<dbReference type="STRING" id="196164.gene:10742638"/>
<dbReference type="KEGG" id="cef:CE2207"/>
<dbReference type="eggNOG" id="COG1443">
    <property type="taxonomic scope" value="Bacteria"/>
</dbReference>
<dbReference type="HOGENOM" id="CLU_060552_2_0_11"/>
<dbReference type="OrthoDB" id="9809458at2"/>
<dbReference type="UniPathway" id="UPA00059">
    <property type="reaction ID" value="UER00104"/>
</dbReference>
<dbReference type="Proteomes" id="UP000001409">
    <property type="component" value="Chromosome"/>
</dbReference>
<dbReference type="GO" id="GO:0005737">
    <property type="term" value="C:cytoplasm"/>
    <property type="evidence" value="ECO:0007669"/>
    <property type="project" value="UniProtKB-SubCell"/>
</dbReference>
<dbReference type="GO" id="GO:0004452">
    <property type="term" value="F:isopentenyl-diphosphate delta-isomerase activity"/>
    <property type="evidence" value="ECO:0007669"/>
    <property type="project" value="UniProtKB-UniRule"/>
</dbReference>
<dbReference type="GO" id="GO:0046872">
    <property type="term" value="F:metal ion binding"/>
    <property type="evidence" value="ECO:0007669"/>
    <property type="project" value="UniProtKB-KW"/>
</dbReference>
<dbReference type="GO" id="GO:0050992">
    <property type="term" value="P:dimethylallyl diphosphate biosynthetic process"/>
    <property type="evidence" value="ECO:0007669"/>
    <property type="project" value="UniProtKB-UniRule"/>
</dbReference>
<dbReference type="GO" id="GO:0008299">
    <property type="term" value="P:isoprenoid biosynthetic process"/>
    <property type="evidence" value="ECO:0007669"/>
    <property type="project" value="UniProtKB-KW"/>
</dbReference>
<dbReference type="CDD" id="cd02885">
    <property type="entry name" value="NUDIX_IPP_Isomerase"/>
    <property type="match status" value="1"/>
</dbReference>
<dbReference type="Gene3D" id="3.90.79.10">
    <property type="entry name" value="Nucleoside Triphosphate Pyrophosphohydrolase"/>
    <property type="match status" value="1"/>
</dbReference>
<dbReference type="HAMAP" id="MF_00202">
    <property type="entry name" value="Idi"/>
    <property type="match status" value="1"/>
</dbReference>
<dbReference type="InterPro" id="IPR056375">
    <property type="entry name" value="Idi_bact"/>
</dbReference>
<dbReference type="InterPro" id="IPR011876">
    <property type="entry name" value="IsopentenylPP_isomerase_typ1"/>
</dbReference>
<dbReference type="InterPro" id="IPR015797">
    <property type="entry name" value="NUDIX_hydrolase-like_dom_sf"/>
</dbReference>
<dbReference type="InterPro" id="IPR000086">
    <property type="entry name" value="NUDIX_hydrolase_dom"/>
</dbReference>
<dbReference type="NCBIfam" id="TIGR02150">
    <property type="entry name" value="IPP_isom_1"/>
    <property type="match status" value="1"/>
</dbReference>
<dbReference type="NCBIfam" id="NF002995">
    <property type="entry name" value="PRK03759.1"/>
    <property type="match status" value="1"/>
</dbReference>
<dbReference type="PANTHER" id="PTHR10885">
    <property type="entry name" value="ISOPENTENYL-DIPHOSPHATE DELTA-ISOMERASE"/>
    <property type="match status" value="1"/>
</dbReference>
<dbReference type="PANTHER" id="PTHR10885:SF0">
    <property type="entry name" value="ISOPENTENYL-DIPHOSPHATE DELTA-ISOMERASE"/>
    <property type="match status" value="1"/>
</dbReference>
<dbReference type="Pfam" id="PF00293">
    <property type="entry name" value="NUDIX"/>
    <property type="match status" value="1"/>
</dbReference>
<dbReference type="PIRSF" id="PIRSF018427">
    <property type="entry name" value="Isopntndiph_ism"/>
    <property type="match status" value="1"/>
</dbReference>
<dbReference type="SUPFAM" id="SSF55811">
    <property type="entry name" value="Nudix"/>
    <property type="match status" value="1"/>
</dbReference>
<dbReference type="PROSITE" id="PS51462">
    <property type="entry name" value="NUDIX"/>
    <property type="match status" value="1"/>
</dbReference>
<comment type="function">
    <text evidence="1">Catalyzes the 1,3-allylic rearrangement of the homoallylic substrate isopentenyl (IPP) to its highly electrophilic allylic isomer, dimethylallyl diphosphate (DMAPP).</text>
</comment>
<comment type="catalytic activity">
    <reaction evidence="1">
        <text>isopentenyl diphosphate = dimethylallyl diphosphate</text>
        <dbReference type="Rhea" id="RHEA:23284"/>
        <dbReference type="ChEBI" id="CHEBI:57623"/>
        <dbReference type="ChEBI" id="CHEBI:128769"/>
        <dbReference type="EC" id="5.3.3.2"/>
    </reaction>
</comment>
<comment type="cofactor">
    <cofactor evidence="1">
        <name>Mg(2+)</name>
        <dbReference type="ChEBI" id="CHEBI:18420"/>
    </cofactor>
    <text evidence="1">Binds 1 Mg(2+) ion per subunit. The magnesium ion binds only when substrate is bound.</text>
</comment>
<comment type="cofactor">
    <cofactor evidence="1">
        <name>Mn(2+)</name>
        <dbReference type="ChEBI" id="CHEBI:29035"/>
    </cofactor>
    <text evidence="1">Binds 1 Mn(2+) ion per subunit.</text>
</comment>
<comment type="pathway">
    <text evidence="1">Isoprenoid biosynthesis; dimethylallyl diphosphate biosynthesis; dimethylallyl diphosphate from isopentenyl diphosphate: step 1/1.</text>
</comment>
<comment type="subcellular location">
    <subcellularLocation>
        <location evidence="1">Cytoplasm</location>
    </subcellularLocation>
</comment>
<comment type="similarity">
    <text evidence="1">Belongs to the IPP isomerase type 1 family.</text>
</comment>
<evidence type="ECO:0000255" key="1">
    <source>
        <dbReference type="HAMAP-Rule" id="MF_00202"/>
    </source>
</evidence>
<accession>Q8FND7</accession>